<name>RADB_THEKO</name>
<comment type="function">
    <text evidence="1">Involved in DNA repair and in homologous recombination. May regulate the cleavage reactions of the branch-structured DNA. Has a very weak ATPase activity that is not stimulated by DNA. Binds DNA but does not promote DNA strands exchange (By similarity).</text>
</comment>
<comment type="similarity">
    <text evidence="3">Belongs to the eukaryotic RecA-like protein family. RadB subfamily.</text>
</comment>
<sequence>MLSTGTKSLDSLLGGGFAPGVLTQVYGPYASGKTTLALQTGLLSGKKVAYVDTEGGFSPERLVQMAETRGLNPEEALSRFILFTPSDFKEQRRVIGSLKKTVDSNFALVVVDSITAHYRAEENRSGLIAELSRQLQVLLWIARKHNIPVIVINQVHFDSRTEMTKPVAEQTLGYRCKDILRLDKLPKPGLRVAVLERHRFRPEGLMAYFRITERGIEDVE</sequence>
<organism>
    <name type="scientific">Thermococcus kodakarensis (strain ATCC BAA-918 / JCM 12380 / KOD1)</name>
    <name type="common">Pyrococcus kodakaraensis (strain KOD1)</name>
    <dbReference type="NCBI Taxonomy" id="69014"/>
    <lineage>
        <taxon>Archaea</taxon>
        <taxon>Methanobacteriati</taxon>
        <taxon>Methanobacteriota</taxon>
        <taxon>Thermococci</taxon>
        <taxon>Thermococcales</taxon>
        <taxon>Thermococcaceae</taxon>
        <taxon>Thermococcus</taxon>
    </lineage>
</organism>
<accession>P95547</accession>
<reference key="1">
    <citation type="journal article" date="1996" name="Mol. Gen. Genet.">
        <title>A RecA/RAD51 homologue from a hyperthermophilic archaeon retains the major RecA domain only.</title>
        <authorList>
            <person name="Rashid N."/>
            <person name="Morikawa M."/>
            <person name="Imanaka T."/>
        </authorList>
    </citation>
    <scope>NUCLEOTIDE SEQUENCE [GENOMIC DNA]</scope>
    <source>
        <strain>ATCC BAA-918 / JCM 12380 / KOD1</strain>
    </source>
</reference>
<reference key="2">
    <citation type="journal article" date="2005" name="Genome Res.">
        <title>Complete genome sequence of the hyperthermophilic archaeon Thermococcus kodakaraensis KOD1 and comparison with Pyrococcus genomes.</title>
        <authorList>
            <person name="Fukui T."/>
            <person name="Atomi H."/>
            <person name="Kanai T."/>
            <person name="Matsumi R."/>
            <person name="Fujiwara S."/>
            <person name="Imanaka T."/>
        </authorList>
    </citation>
    <scope>NUCLEOTIDE SEQUENCE [LARGE SCALE GENOMIC DNA]</scope>
    <source>
        <strain>ATCC BAA-918 / JCM 12380 / KOD1</strain>
    </source>
</reference>
<protein>
    <recommendedName>
        <fullName>DNA repair and recombination protein RadB</fullName>
    </recommendedName>
</protein>
<gene>
    <name type="primary">radB</name>
    <name type="synonym">Pk-REC</name>
    <name type="ordered locus">TK2231</name>
</gene>
<dbReference type="EMBL" id="D83176">
    <property type="protein sequence ID" value="BAA11830.2"/>
    <property type="molecule type" value="Genomic_DNA"/>
</dbReference>
<dbReference type="EMBL" id="AP006878">
    <property type="protein sequence ID" value="BAD86420.1"/>
    <property type="molecule type" value="Genomic_DNA"/>
</dbReference>
<dbReference type="PIR" id="T46872">
    <property type="entry name" value="T46872"/>
</dbReference>
<dbReference type="RefSeq" id="WP_011251181.1">
    <property type="nucleotide sequence ID" value="NC_006624.1"/>
</dbReference>
<dbReference type="PDB" id="2CVF">
    <property type="method" value="X-ray"/>
    <property type="resolution" value="2.60 A"/>
    <property type="chains" value="A/B=1-220"/>
</dbReference>
<dbReference type="PDB" id="2CVH">
    <property type="method" value="X-ray"/>
    <property type="resolution" value="2.20 A"/>
    <property type="chains" value="A/B=1-220"/>
</dbReference>
<dbReference type="PDBsum" id="2CVF"/>
<dbReference type="PDBsum" id="2CVH"/>
<dbReference type="SMR" id="P95547"/>
<dbReference type="STRING" id="69014.TK2231"/>
<dbReference type="EnsemblBacteria" id="BAD86420">
    <property type="protein sequence ID" value="BAD86420"/>
    <property type="gene ID" value="TK2231"/>
</dbReference>
<dbReference type="GeneID" id="78448771"/>
<dbReference type="KEGG" id="tko:TK2231"/>
<dbReference type="PATRIC" id="fig|69014.16.peg.2186"/>
<dbReference type="eggNOG" id="arCOG00417">
    <property type="taxonomic scope" value="Archaea"/>
</dbReference>
<dbReference type="HOGENOM" id="CLU_041732_2_0_2"/>
<dbReference type="InParanoid" id="P95547"/>
<dbReference type="OrthoDB" id="17644at2157"/>
<dbReference type="PhylomeDB" id="P95547"/>
<dbReference type="BRENDA" id="3.6.1.8">
    <property type="organism ID" value="5246"/>
</dbReference>
<dbReference type="EvolutionaryTrace" id="P95547"/>
<dbReference type="Proteomes" id="UP000000536">
    <property type="component" value="Chromosome"/>
</dbReference>
<dbReference type="GO" id="GO:0005524">
    <property type="term" value="F:ATP binding"/>
    <property type="evidence" value="ECO:0007669"/>
    <property type="project" value="UniProtKB-UniRule"/>
</dbReference>
<dbReference type="GO" id="GO:0140664">
    <property type="term" value="F:ATP-dependent DNA damage sensor activity"/>
    <property type="evidence" value="ECO:0007669"/>
    <property type="project" value="InterPro"/>
</dbReference>
<dbReference type="GO" id="GO:0003684">
    <property type="term" value="F:damaged DNA binding"/>
    <property type="evidence" value="ECO:0007669"/>
    <property type="project" value="UniProtKB-UniRule"/>
</dbReference>
<dbReference type="GO" id="GO:0006310">
    <property type="term" value="P:DNA recombination"/>
    <property type="evidence" value="ECO:0007669"/>
    <property type="project" value="UniProtKB-UniRule"/>
</dbReference>
<dbReference type="GO" id="GO:0006281">
    <property type="term" value="P:DNA repair"/>
    <property type="evidence" value="ECO:0007669"/>
    <property type="project" value="UniProtKB-UniRule"/>
</dbReference>
<dbReference type="CDD" id="cd01394">
    <property type="entry name" value="archRadB"/>
    <property type="match status" value="1"/>
</dbReference>
<dbReference type="Gene3D" id="3.40.50.300">
    <property type="entry name" value="P-loop containing nucleotide triphosphate hydrolases"/>
    <property type="match status" value="1"/>
</dbReference>
<dbReference type="HAMAP" id="MF_00350">
    <property type="entry name" value="RadB"/>
    <property type="match status" value="1"/>
</dbReference>
<dbReference type="InterPro" id="IPR013632">
    <property type="entry name" value="DNA_recomb/repair_Rad51_C"/>
</dbReference>
<dbReference type="InterPro" id="IPR011939">
    <property type="entry name" value="DNA_repair_and_recomb_RadB"/>
</dbReference>
<dbReference type="InterPro" id="IPR027417">
    <property type="entry name" value="P-loop_NTPase"/>
</dbReference>
<dbReference type="InterPro" id="IPR020588">
    <property type="entry name" value="RecA_ATP-bd"/>
</dbReference>
<dbReference type="NCBIfam" id="TIGR02237">
    <property type="entry name" value="recomb_radB"/>
    <property type="match status" value="1"/>
</dbReference>
<dbReference type="PANTHER" id="PTHR22942:SF47">
    <property type="entry name" value="DNA REPAIR AND RECOMBINATION PROTEIN RADB"/>
    <property type="match status" value="1"/>
</dbReference>
<dbReference type="PANTHER" id="PTHR22942">
    <property type="entry name" value="RECA/RAD51/RADA DNA STRAND-PAIRING FAMILY MEMBER"/>
    <property type="match status" value="1"/>
</dbReference>
<dbReference type="Pfam" id="PF08423">
    <property type="entry name" value="Rad51"/>
    <property type="match status" value="1"/>
</dbReference>
<dbReference type="PIRSF" id="PIRSF003336">
    <property type="entry name" value="RadB"/>
    <property type="match status" value="1"/>
</dbReference>
<dbReference type="PRINTS" id="PR01874">
    <property type="entry name" value="DNAREPAIRADA"/>
</dbReference>
<dbReference type="SUPFAM" id="SSF52540">
    <property type="entry name" value="P-loop containing nucleoside triphosphate hydrolases"/>
    <property type="match status" value="1"/>
</dbReference>
<dbReference type="PROSITE" id="PS50162">
    <property type="entry name" value="RECA_2"/>
    <property type="match status" value="1"/>
</dbReference>
<feature type="chain" id="PRO_0000150119" description="DNA repair and recombination protein RadB">
    <location>
        <begin position="1"/>
        <end position="220"/>
    </location>
</feature>
<feature type="binding site" evidence="2">
    <location>
        <begin position="27"/>
        <end position="34"/>
    </location>
    <ligand>
        <name>ATP</name>
        <dbReference type="ChEBI" id="CHEBI:30616"/>
    </ligand>
</feature>
<feature type="helix" evidence="5">
    <location>
        <begin position="7"/>
        <end position="12"/>
    </location>
</feature>
<feature type="strand" evidence="5">
    <location>
        <begin position="15"/>
        <end position="17"/>
    </location>
</feature>
<feature type="strand" evidence="5">
    <location>
        <begin position="21"/>
        <end position="26"/>
    </location>
</feature>
<feature type="strand" evidence="4">
    <location>
        <begin position="29"/>
        <end position="32"/>
    </location>
</feature>
<feature type="helix" evidence="5">
    <location>
        <begin position="33"/>
        <end position="44"/>
    </location>
</feature>
<feature type="strand" evidence="5">
    <location>
        <begin position="46"/>
        <end position="54"/>
    </location>
</feature>
<feature type="helix" evidence="5">
    <location>
        <begin position="59"/>
        <end position="67"/>
    </location>
</feature>
<feature type="turn" evidence="5">
    <location>
        <begin position="68"/>
        <end position="70"/>
    </location>
</feature>
<feature type="helix" evidence="5">
    <location>
        <begin position="73"/>
        <end position="79"/>
    </location>
</feature>
<feature type="strand" evidence="5">
    <location>
        <begin position="80"/>
        <end position="83"/>
    </location>
</feature>
<feature type="turn" evidence="5">
    <location>
        <begin position="86"/>
        <end position="88"/>
    </location>
</feature>
<feature type="helix" evidence="5">
    <location>
        <begin position="90"/>
        <end position="101"/>
    </location>
</feature>
<feature type="strand" evidence="5">
    <location>
        <begin position="106"/>
        <end position="112"/>
    </location>
</feature>
<feature type="helix" evidence="5">
    <location>
        <begin position="120"/>
        <end position="123"/>
    </location>
</feature>
<feature type="helix" evidence="5">
    <location>
        <begin position="128"/>
        <end position="145"/>
    </location>
</feature>
<feature type="strand" evidence="5">
    <location>
        <begin position="149"/>
        <end position="153"/>
    </location>
</feature>
<feature type="strand" evidence="5">
    <location>
        <begin position="155"/>
        <end position="158"/>
    </location>
</feature>
<feature type="turn" evidence="4">
    <location>
        <begin position="161"/>
        <end position="163"/>
    </location>
</feature>
<feature type="strand" evidence="4">
    <location>
        <begin position="164"/>
        <end position="166"/>
    </location>
</feature>
<feature type="helix" evidence="5">
    <location>
        <begin position="170"/>
        <end position="174"/>
    </location>
</feature>
<feature type="strand" evidence="5">
    <location>
        <begin position="176"/>
        <end position="184"/>
    </location>
</feature>
<feature type="strand" evidence="5">
    <location>
        <begin position="190"/>
        <end position="197"/>
    </location>
</feature>
<feature type="strand" evidence="5">
    <location>
        <begin position="199"/>
        <end position="201"/>
    </location>
</feature>
<feature type="strand" evidence="5">
    <location>
        <begin position="206"/>
        <end position="212"/>
    </location>
</feature>
<feature type="strand" evidence="5">
    <location>
        <begin position="215"/>
        <end position="218"/>
    </location>
</feature>
<keyword id="KW-0002">3D-structure</keyword>
<keyword id="KW-0067">ATP-binding</keyword>
<keyword id="KW-0227">DNA damage</keyword>
<keyword id="KW-0233">DNA recombination</keyword>
<keyword id="KW-0238">DNA-binding</keyword>
<keyword id="KW-0547">Nucleotide-binding</keyword>
<keyword id="KW-1185">Reference proteome</keyword>
<proteinExistence type="evidence at protein level"/>
<evidence type="ECO:0000250" key="1"/>
<evidence type="ECO:0000255" key="2"/>
<evidence type="ECO:0000305" key="3"/>
<evidence type="ECO:0007829" key="4">
    <source>
        <dbReference type="PDB" id="2CVF"/>
    </source>
</evidence>
<evidence type="ECO:0007829" key="5">
    <source>
        <dbReference type="PDB" id="2CVH"/>
    </source>
</evidence>